<name>PYRB_METM6</name>
<reference key="1">
    <citation type="submission" date="2007-10" db="EMBL/GenBank/DDBJ databases">
        <title>Complete sequence of Methanococcus maripaludis C6.</title>
        <authorList>
            <consortium name="US DOE Joint Genome Institute"/>
            <person name="Copeland A."/>
            <person name="Lucas S."/>
            <person name="Lapidus A."/>
            <person name="Barry K."/>
            <person name="Glavina del Rio T."/>
            <person name="Dalin E."/>
            <person name="Tice H."/>
            <person name="Pitluck S."/>
            <person name="Clum A."/>
            <person name="Schmutz J."/>
            <person name="Larimer F."/>
            <person name="Land M."/>
            <person name="Hauser L."/>
            <person name="Kyrpides N."/>
            <person name="Mikhailova N."/>
            <person name="Sieprawska-Lupa M."/>
            <person name="Whitman W.B."/>
            <person name="Richardson P."/>
        </authorList>
    </citation>
    <scope>NUCLEOTIDE SEQUENCE [LARGE SCALE GENOMIC DNA]</scope>
    <source>
        <strain>C6 / ATCC BAA-1332</strain>
    </source>
</reference>
<evidence type="ECO:0000255" key="1">
    <source>
        <dbReference type="HAMAP-Rule" id="MF_00001"/>
    </source>
</evidence>
<gene>
    <name evidence="1" type="primary">pyrB</name>
    <name type="ordered locus">MmarC6_1014</name>
</gene>
<comment type="function">
    <text evidence="1">Catalyzes the condensation of carbamoyl phosphate and aspartate to form carbamoyl aspartate and inorganic phosphate, the committed step in the de novo pyrimidine nucleotide biosynthesis pathway.</text>
</comment>
<comment type="catalytic activity">
    <reaction evidence="1">
        <text>carbamoyl phosphate + L-aspartate = N-carbamoyl-L-aspartate + phosphate + H(+)</text>
        <dbReference type="Rhea" id="RHEA:20013"/>
        <dbReference type="ChEBI" id="CHEBI:15378"/>
        <dbReference type="ChEBI" id="CHEBI:29991"/>
        <dbReference type="ChEBI" id="CHEBI:32814"/>
        <dbReference type="ChEBI" id="CHEBI:43474"/>
        <dbReference type="ChEBI" id="CHEBI:58228"/>
        <dbReference type="EC" id="2.1.3.2"/>
    </reaction>
</comment>
<comment type="pathway">
    <text evidence="1">Pyrimidine metabolism; UMP biosynthesis via de novo pathway; (S)-dihydroorotate from bicarbonate: step 2/3.</text>
</comment>
<comment type="subunit">
    <text evidence="1">Heterooligomer of catalytic and regulatory chains.</text>
</comment>
<comment type="similarity">
    <text evidence="1">Belongs to the aspartate/ornithine carbamoyltransferase superfamily. ATCase family.</text>
</comment>
<keyword id="KW-0665">Pyrimidine biosynthesis</keyword>
<keyword id="KW-0808">Transferase</keyword>
<organism>
    <name type="scientific">Methanococcus maripaludis (strain C6 / ATCC BAA-1332)</name>
    <dbReference type="NCBI Taxonomy" id="444158"/>
    <lineage>
        <taxon>Archaea</taxon>
        <taxon>Methanobacteriati</taxon>
        <taxon>Methanobacteriota</taxon>
        <taxon>Methanomada group</taxon>
        <taxon>Methanococci</taxon>
        <taxon>Methanococcales</taxon>
        <taxon>Methanococcaceae</taxon>
        <taxon>Methanococcus</taxon>
    </lineage>
</organism>
<accession>A9A906</accession>
<protein>
    <recommendedName>
        <fullName evidence="1">Aspartate carbamoyltransferase catalytic subunit</fullName>
        <ecNumber evidence="1">2.1.3.2</ecNumber>
    </recommendedName>
    <alternativeName>
        <fullName evidence="1">Aspartate transcarbamylase</fullName>
        <shortName evidence="1">ATCase</shortName>
    </alternativeName>
</protein>
<dbReference type="EC" id="2.1.3.2" evidence="1"/>
<dbReference type="EMBL" id="CP000867">
    <property type="protein sequence ID" value="ABX01829.1"/>
    <property type="molecule type" value="Genomic_DNA"/>
</dbReference>
<dbReference type="SMR" id="A9A906"/>
<dbReference type="STRING" id="444158.MmarC6_1014"/>
<dbReference type="KEGG" id="mmx:MmarC6_1014"/>
<dbReference type="eggNOG" id="arCOG00911">
    <property type="taxonomic scope" value="Archaea"/>
</dbReference>
<dbReference type="HOGENOM" id="CLU_043846_1_2_2"/>
<dbReference type="OrthoDB" id="7792at2157"/>
<dbReference type="PhylomeDB" id="A9A906"/>
<dbReference type="UniPathway" id="UPA00070">
    <property type="reaction ID" value="UER00116"/>
</dbReference>
<dbReference type="GO" id="GO:0016597">
    <property type="term" value="F:amino acid binding"/>
    <property type="evidence" value="ECO:0007669"/>
    <property type="project" value="InterPro"/>
</dbReference>
<dbReference type="GO" id="GO:0004070">
    <property type="term" value="F:aspartate carbamoyltransferase activity"/>
    <property type="evidence" value="ECO:0007669"/>
    <property type="project" value="UniProtKB-UniRule"/>
</dbReference>
<dbReference type="GO" id="GO:0006207">
    <property type="term" value="P:'de novo' pyrimidine nucleobase biosynthetic process"/>
    <property type="evidence" value="ECO:0007669"/>
    <property type="project" value="InterPro"/>
</dbReference>
<dbReference type="GO" id="GO:0044205">
    <property type="term" value="P:'de novo' UMP biosynthetic process"/>
    <property type="evidence" value="ECO:0007669"/>
    <property type="project" value="UniProtKB-UniRule"/>
</dbReference>
<dbReference type="GO" id="GO:0006520">
    <property type="term" value="P:amino acid metabolic process"/>
    <property type="evidence" value="ECO:0007669"/>
    <property type="project" value="InterPro"/>
</dbReference>
<dbReference type="FunFam" id="3.40.50.1370:FF:000001">
    <property type="entry name" value="Aspartate carbamoyltransferase"/>
    <property type="match status" value="1"/>
</dbReference>
<dbReference type="FunFam" id="3.40.50.1370:FF:000002">
    <property type="entry name" value="Aspartate carbamoyltransferase 2"/>
    <property type="match status" value="1"/>
</dbReference>
<dbReference type="Gene3D" id="3.40.50.1370">
    <property type="entry name" value="Aspartate/ornithine carbamoyltransferase"/>
    <property type="match status" value="2"/>
</dbReference>
<dbReference type="HAMAP" id="MF_00001">
    <property type="entry name" value="Asp_carb_tr"/>
    <property type="match status" value="1"/>
</dbReference>
<dbReference type="InterPro" id="IPR006132">
    <property type="entry name" value="Asp/Orn_carbamoyltranf_P-bd"/>
</dbReference>
<dbReference type="InterPro" id="IPR006130">
    <property type="entry name" value="Asp/Orn_carbamoylTrfase"/>
</dbReference>
<dbReference type="InterPro" id="IPR036901">
    <property type="entry name" value="Asp/Orn_carbamoylTrfase_sf"/>
</dbReference>
<dbReference type="InterPro" id="IPR002082">
    <property type="entry name" value="Asp_carbamoyltransf"/>
</dbReference>
<dbReference type="InterPro" id="IPR006131">
    <property type="entry name" value="Asp_carbamoyltransf_Asp/Orn-bd"/>
</dbReference>
<dbReference type="NCBIfam" id="TIGR00670">
    <property type="entry name" value="asp_carb_tr"/>
    <property type="match status" value="1"/>
</dbReference>
<dbReference type="NCBIfam" id="NF002032">
    <property type="entry name" value="PRK00856.1"/>
    <property type="match status" value="1"/>
</dbReference>
<dbReference type="PANTHER" id="PTHR45753:SF6">
    <property type="entry name" value="ASPARTATE CARBAMOYLTRANSFERASE"/>
    <property type="match status" value="1"/>
</dbReference>
<dbReference type="PANTHER" id="PTHR45753">
    <property type="entry name" value="ORNITHINE CARBAMOYLTRANSFERASE, MITOCHONDRIAL"/>
    <property type="match status" value="1"/>
</dbReference>
<dbReference type="Pfam" id="PF00185">
    <property type="entry name" value="OTCace"/>
    <property type="match status" value="1"/>
</dbReference>
<dbReference type="Pfam" id="PF02729">
    <property type="entry name" value="OTCace_N"/>
    <property type="match status" value="1"/>
</dbReference>
<dbReference type="PRINTS" id="PR00100">
    <property type="entry name" value="AOTCASE"/>
</dbReference>
<dbReference type="PRINTS" id="PR00101">
    <property type="entry name" value="ATCASE"/>
</dbReference>
<dbReference type="SUPFAM" id="SSF53671">
    <property type="entry name" value="Aspartate/ornithine carbamoyltransferase"/>
    <property type="match status" value="1"/>
</dbReference>
<dbReference type="PROSITE" id="PS00097">
    <property type="entry name" value="CARBAMOYLTRANSFERASE"/>
    <property type="match status" value="1"/>
</dbReference>
<sequence>MRHLISMRDIGREEILNILDESERMEAILNEKGHCDFLNGRILATLFYEPSTRTRLSFETAMKRLGGNVIGFTDISNTSVTKGESLADTIKVISGYSDLIAIRHPSEGAARLSSENSKVPVINAGDGSNQHPTQTLLDLYTIKREVGHIENLKIAFIGDLKYGRTVHSLCQALSLFKGVEIKLISPDELKMPREVIEDISGKIKLSEMTDVEIDDVDVVYMTRIQKERFVDVNEYYKVKGIYRLSKEHIGDKNVVIMHPLPRVDEIDSEVDTLPQARYFKQSFYGVPVRMAILKLLFEDSVK</sequence>
<proteinExistence type="inferred from homology"/>
<feature type="chain" id="PRO_1000088777" description="Aspartate carbamoyltransferase catalytic subunit">
    <location>
        <begin position="1"/>
        <end position="302"/>
    </location>
</feature>
<feature type="binding site" evidence="1">
    <location>
        <position position="53"/>
    </location>
    <ligand>
        <name>carbamoyl phosphate</name>
        <dbReference type="ChEBI" id="CHEBI:58228"/>
    </ligand>
</feature>
<feature type="binding site" evidence="1">
    <location>
        <position position="54"/>
    </location>
    <ligand>
        <name>carbamoyl phosphate</name>
        <dbReference type="ChEBI" id="CHEBI:58228"/>
    </ligand>
</feature>
<feature type="binding site" evidence="1">
    <location>
        <position position="82"/>
    </location>
    <ligand>
        <name>L-aspartate</name>
        <dbReference type="ChEBI" id="CHEBI:29991"/>
    </ligand>
</feature>
<feature type="binding site" evidence="1">
    <location>
        <position position="103"/>
    </location>
    <ligand>
        <name>carbamoyl phosphate</name>
        <dbReference type="ChEBI" id="CHEBI:58228"/>
    </ligand>
</feature>
<feature type="binding site" evidence="1">
    <location>
        <position position="131"/>
    </location>
    <ligand>
        <name>carbamoyl phosphate</name>
        <dbReference type="ChEBI" id="CHEBI:58228"/>
    </ligand>
</feature>
<feature type="binding site" evidence="1">
    <location>
        <position position="134"/>
    </location>
    <ligand>
        <name>carbamoyl phosphate</name>
        <dbReference type="ChEBI" id="CHEBI:58228"/>
    </ligand>
</feature>
<feature type="binding site" evidence="1">
    <location>
        <position position="164"/>
    </location>
    <ligand>
        <name>L-aspartate</name>
        <dbReference type="ChEBI" id="CHEBI:29991"/>
    </ligand>
</feature>
<feature type="binding site" evidence="1">
    <location>
        <position position="223"/>
    </location>
    <ligand>
        <name>L-aspartate</name>
        <dbReference type="ChEBI" id="CHEBI:29991"/>
    </ligand>
</feature>
<feature type="binding site" evidence="1">
    <location>
        <position position="260"/>
    </location>
    <ligand>
        <name>carbamoyl phosphate</name>
        <dbReference type="ChEBI" id="CHEBI:58228"/>
    </ligand>
</feature>
<feature type="binding site" evidence="1">
    <location>
        <position position="261"/>
    </location>
    <ligand>
        <name>carbamoyl phosphate</name>
        <dbReference type="ChEBI" id="CHEBI:58228"/>
    </ligand>
</feature>